<geneLocation type="plasmid">
    <name>pSOL1</name>
</geneLocation>
<gene>
    <name evidence="1" type="primary">mntH</name>
    <name type="ordered locus">CA_P0063</name>
</gene>
<proteinExistence type="inferred from homology"/>
<dbReference type="EMBL" id="AE001438">
    <property type="protein sequence ID" value="AAK76809.1"/>
    <property type="molecule type" value="Genomic_DNA"/>
</dbReference>
<dbReference type="RefSeq" id="NP_149227.1">
    <property type="nucleotide sequence ID" value="NC_001988.2"/>
</dbReference>
<dbReference type="RefSeq" id="WP_010890748.1">
    <property type="nucleotide sequence ID" value="NC_001988.2"/>
</dbReference>
<dbReference type="SMR" id="Q97TN5"/>
<dbReference type="KEGG" id="cac:CA_P0063"/>
<dbReference type="PATRIC" id="fig|272562.8.peg.63"/>
<dbReference type="HOGENOM" id="CLU_020088_2_0_9"/>
<dbReference type="OrthoDB" id="9787548at2"/>
<dbReference type="Proteomes" id="UP000000814">
    <property type="component" value="Plasmid pSOL1"/>
</dbReference>
<dbReference type="GO" id="GO:0005886">
    <property type="term" value="C:plasma membrane"/>
    <property type="evidence" value="ECO:0007669"/>
    <property type="project" value="UniProtKB-SubCell"/>
</dbReference>
<dbReference type="GO" id="GO:0015086">
    <property type="term" value="F:cadmium ion transmembrane transporter activity"/>
    <property type="evidence" value="ECO:0007669"/>
    <property type="project" value="TreeGrafter"/>
</dbReference>
<dbReference type="GO" id="GO:0005384">
    <property type="term" value="F:manganese ion transmembrane transporter activity"/>
    <property type="evidence" value="ECO:0007669"/>
    <property type="project" value="TreeGrafter"/>
</dbReference>
<dbReference type="GO" id="GO:0046872">
    <property type="term" value="F:metal ion binding"/>
    <property type="evidence" value="ECO:0007669"/>
    <property type="project" value="UniProtKB-UniRule"/>
</dbReference>
<dbReference type="GO" id="GO:0015293">
    <property type="term" value="F:symporter activity"/>
    <property type="evidence" value="ECO:0007669"/>
    <property type="project" value="UniProtKB-UniRule"/>
</dbReference>
<dbReference type="GO" id="GO:0034755">
    <property type="term" value="P:iron ion transmembrane transport"/>
    <property type="evidence" value="ECO:0007669"/>
    <property type="project" value="TreeGrafter"/>
</dbReference>
<dbReference type="HAMAP" id="MF_00221">
    <property type="entry name" value="NRAMP"/>
    <property type="match status" value="1"/>
</dbReference>
<dbReference type="InterPro" id="IPR001046">
    <property type="entry name" value="NRAMP_fam"/>
</dbReference>
<dbReference type="NCBIfam" id="TIGR01197">
    <property type="entry name" value="nramp"/>
    <property type="match status" value="1"/>
</dbReference>
<dbReference type="NCBIfam" id="NF037982">
    <property type="entry name" value="Nramp_1"/>
    <property type="match status" value="1"/>
</dbReference>
<dbReference type="NCBIfam" id="NF001923">
    <property type="entry name" value="PRK00701.1"/>
    <property type="match status" value="1"/>
</dbReference>
<dbReference type="PANTHER" id="PTHR11706:SF33">
    <property type="entry name" value="NATURAL RESISTANCE-ASSOCIATED MACROPHAGE PROTEIN 2"/>
    <property type="match status" value="1"/>
</dbReference>
<dbReference type="PANTHER" id="PTHR11706">
    <property type="entry name" value="SOLUTE CARRIER PROTEIN FAMILY 11 MEMBER"/>
    <property type="match status" value="1"/>
</dbReference>
<dbReference type="Pfam" id="PF01566">
    <property type="entry name" value="Nramp"/>
    <property type="match status" value="1"/>
</dbReference>
<dbReference type="PRINTS" id="PR00447">
    <property type="entry name" value="NATRESASSCMP"/>
</dbReference>
<sequence>MDKLSIREDNYNIKHKTISLNRASSVTRNLKGLLKFLGPAFVVSVAYIDPGNFATNISGGSSFNYNLIWVILWSNLMAIFLQTMSAKLGIATGCSLPEMCAKVFSKRANWIFWIVGELGAMATDLAEFIGGTLGLYLLFRIPMIYAGLLTGVLTFIIVYMEKYGQKMVETIIAALIAVICVAYTIELFLARPAWTQVGMHTLIPSLPNGEAVLIAVGMLGATVMPHVIYLHSELVQHRNTNSSDKEKLHHLKMEKIDILIAMNIAFVVNAAMVIVSAAVFFKHGIKVSTIEEAHRSLQPLLGNLSSGAFGIALLASGLSSSAVGTMAGQTIMKGFVNLSIPINLRRIITMLPALIIIALGINPMRVLVLSQVALSFILPFPIIQMLLIAGRKDLMGILVNKKFTKIVGFIIATMIILLNIILLYLTFTGQT</sequence>
<organism>
    <name type="scientific">Clostridium acetobutylicum (strain ATCC 824 / DSM 792 / JCM 1419 / IAM 19013 / LMG 5710 / NBRC 13948 / NRRL B-527 / VKM B-1787 / 2291 / W)</name>
    <dbReference type="NCBI Taxonomy" id="272562"/>
    <lineage>
        <taxon>Bacteria</taxon>
        <taxon>Bacillati</taxon>
        <taxon>Bacillota</taxon>
        <taxon>Clostridia</taxon>
        <taxon>Eubacteriales</taxon>
        <taxon>Clostridiaceae</taxon>
        <taxon>Clostridium</taxon>
    </lineage>
</organism>
<name>MNTH_CLOAB</name>
<accession>Q97TN5</accession>
<comment type="function">
    <text evidence="1">H(+)-stimulated, divalent metal cation uptake system.</text>
</comment>
<comment type="subcellular location">
    <subcellularLocation>
        <location evidence="1">Cell membrane</location>
        <topology evidence="1">Multi-pass membrane protein</topology>
    </subcellularLocation>
</comment>
<comment type="similarity">
    <text evidence="1">Belongs to the NRAMP family.</text>
</comment>
<evidence type="ECO:0000255" key="1">
    <source>
        <dbReference type="HAMAP-Rule" id="MF_00221"/>
    </source>
</evidence>
<keyword id="KW-1003">Cell membrane</keyword>
<keyword id="KW-0406">Ion transport</keyword>
<keyword id="KW-0472">Membrane</keyword>
<keyword id="KW-0614">Plasmid</keyword>
<keyword id="KW-1185">Reference proteome</keyword>
<keyword id="KW-0769">Symport</keyword>
<keyword id="KW-0812">Transmembrane</keyword>
<keyword id="KW-1133">Transmembrane helix</keyword>
<keyword id="KW-0813">Transport</keyword>
<reference key="1">
    <citation type="journal article" date="2001" name="J. Bacteriol.">
        <title>Genome sequence and comparative analysis of the solvent-producing bacterium Clostridium acetobutylicum.</title>
        <authorList>
            <person name="Noelling J."/>
            <person name="Breton G."/>
            <person name="Omelchenko M.V."/>
            <person name="Makarova K.S."/>
            <person name="Zeng Q."/>
            <person name="Gibson R."/>
            <person name="Lee H.M."/>
            <person name="Dubois J."/>
            <person name="Qiu D."/>
            <person name="Hitti J."/>
            <person name="Wolf Y.I."/>
            <person name="Tatusov R.L."/>
            <person name="Sabathe F."/>
            <person name="Doucette-Stamm L.A."/>
            <person name="Soucaille P."/>
            <person name="Daly M.J."/>
            <person name="Bennett G.N."/>
            <person name="Koonin E.V."/>
            <person name="Smith D.R."/>
        </authorList>
    </citation>
    <scope>NUCLEOTIDE SEQUENCE [LARGE SCALE GENOMIC DNA]</scope>
    <source>
        <strain>ATCC 824 / DSM 792 / JCM 1419 / IAM 19013 / LMG 5710 / NBRC 13948 / NRRL B-527 / VKM B-1787 / 2291 / W</strain>
    </source>
</reference>
<feature type="chain" id="PRO_0000212615" description="Divalent metal cation transporter MntH">
    <location>
        <begin position="1"/>
        <end position="431"/>
    </location>
</feature>
<feature type="transmembrane region" description="Helical" evidence="1">
    <location>
        <begin position="33"/>
        <end position="53"/>
    </location>
</feature>
<feature type="transmembrane region" description="Helical" evidence="1">
    <location>
        <begin position="61"/>
        <end position="81"/>
    </location>
</feature>
<feature type="transmembrane region" description="Helical" evidence="1">
    <location>
        <begin position="110"/>
        <end position="130"/>
    </location>
</feature>
<feature type="transmembrane region" description="Helical" evidence="1">
    <location>
        <begin position="141"/>
        <end position="161"/>
    </location>
</feature>
<feature type="transmembrane region" description="Helical" evidence="1">
    <location>
        <begin position="170"/>
        <end position="190"/>
    </location>
</feature>
<feature type="transmembrane region" description="Helical" evidence="1">
    <location>
        <begin position="211"/>
        <end position="231"/>
    </location>
</feature>
<feature type="transmembrane region" description="Helical" evidence="1">
    <location>
        <begin position="258"/>
        <end position="278"/>
    </location>
</feature>
<feature type="transmembrane region" description="Helical" evidence="1">
    <location>
        <begin position="307"/>
        <end position="327"/>
    </location>
</feature>
<feature type="transmembrane region" description="Helical" evidence="1">
    <location>
        <begin position="347"/>
        <end position="367"/>
    </location>
</feature>
<feature type="transmembrane region" description="Helical" evidence="1">
    <location>
        <begin position="368"/>
        <end position="388"/>
    </location>
</feature>
<feature type="transmembrane region" description="Helical" evidence="1">
    <location>
        <begin position="406"/>
        <end position="426"/>
    </location>
</feature>
<protein>
    <recommendedName>
        <fullName evidence="1">Divalent metal cation transporter MntH</fullName>
    </recommendedName>
</protein>